<name>MOT9_MOUSE</name>
<keyword id="KW-1003">Cell membrane</keyword>
<keyword id="KW-0472">Membrane</keyword>
<keyword id="KW-1185">Reference proteome</keyword>
<keyword id="KW-0812">Transmembrane</keyword>
<keyword id="KW-1133">Transmembrane helix</keyword>
<proteinExistence type="evidence at transcript level"/>
<sequence length="508" mass="55757">MEFQKSPDGGWGWVIVVVSFFTQFLSYGSPLAVGVLYVEWLDAFGEGKGKTAWVGSLASGVGLLASPVCSLFVSSFGARPVTIFSGFLVAGGLMLSSLAPNIYFLFFSYGIVVGLGCGLLYTATVTITCQYFDSRRGLALGLISTGSSVGLFIYAALQRMLIEFYGLDGCLLIVGALALNILACGSLMRPLQTSDCPFPEKTAPENVPDRYSMYNEKEKNPEETMNFQDKGYSSEDKCLPNGDWGRETSLPKSLAIAAHTKEPETYKKKVVEQTNFCKQLAKRKWQLYRNYCGETASLFKNKVFSALFIAILLFDIGGFPPSLLMEDVARSYHVREEDLTMPLISIFGIMTAVGKLLLGILADFKWINTLYLYVATLIITGLALCAIPFAKSYVTLAILSGILGFLTGNWSIFPYVTTKTVGIDKLAHAYGILMFFAGLGNSLGPPIVGWFYDWTQTYDIAFYFSGFCVLLGGFILLLAILPCWDMCNKKLPKPAVPTTFFYKVASNV</sequence>
<organism>
    <name type="scientific">Mus musculus</name>
    <name type="common">Mouse</name>
    <dbReference type="NCBI Taxonomy" id="10090"/>
    <lineage>
        <taxon>Eukaryota</taxon>
        <taxon>Metazoa</taxon>
        <taxon>Chordata</taxon>
        <taxon>Craniata</taxon>
        <taxon>Vertebrata</taxon>
        <taxon>Euteleostomi</taxon>
        <taxon>Mammalia</taxon>
        <taxon>Eutheria</taxon>
        <taxon>Euarchontoglires</taxon>
        <taxon>Glires</taxon>
        <taxon>Rodentia</taxon>
        <taxon>Myomorpha</taxon>
        <taxon>Muroidea</taxon>
        <taxon>Muridae</taxon>
        <taxon>Murinae</taxon>
        <taxon>Mus</taxon>
        <taxon>Mus</taxon>
    </lineage>
</organism>
<feature type="chain" id="PRO_0000289333" description="Monocarboxylate transporter 9">
    <location>
        <begin position="1"/>
        <end position="508"/>
    </location>
</feature>
<feature type="topological domain" description="Cytoplasmic" evidence="2">
    <location>
        <begin position="1"/>
        <end position="12"/>
    </location>
</feature>
<feature type="transmembrane region" description="Helical" evidence="2">
    <location>
        <begin position="13"/>
        <end position="33"/>
    </location>
</feature>
<feature type="transmembrane region" description="Helical" evidence="2">
    <location>
        <begin position="53"/>
        <end position="73"/>
    </location>
</feature>
<feature type="transmembrane region" description="Helical" evidence="2">
    <location>
        <begin position="80"/>
        <end position="100"/>
    </location>
</feature>
<feature type="transmembrane region" description="Helical" evidence="2">
    <location>
        <begin position="102"/>
        <end position="122"/>
    </location>
</feature>
<feature type="transmembrane region" description="Helical" evidence="2">
    <location>
        <begin position="137"/>
        <end position="157"/>
    </location>
</feature>
<feature type="transmembrane region" description="Helical" evidence="2">
    <location>
        <begin position="164"/>
        <end position="184"/>
    </location>
</feature>
<feature type="transmembrane region" description="Helical" evidence="2">
    <location>
        <begin position="303"/>
        <end position="323"/>
    </location>
</feature>
<feature type="transmembrane region" description="Helical" evidence="2">
    <location>
        <begin position="341"/>
        <end position="361"/>
    </location>
</feature>
<feature type="transmembrane region" description="Helical" evidence="2">
    <location>
        <begin position="370"/>
        <end position="390"/>
    </location>
</feature>
<feature type="transmembrane region" description="Helical" evidence="2">
    <location>
        <begin position="396"/>
        <end position="416"/>
    </location>
</feature>
<feature type="transmembrane region" description="Helical" evidence="2">
    <location>
        <begin position="431"/>
        <end position="451"/>
    </location>
</feature>
<feature type="transmembrane region" description="Helical" evidence="2">
    <location>
        <begin position="460"/>
        <end position="480"/>
    </location>
</feature>
<feature type="topological domain" description="Cytoplasmic" evidence="2">
    <location>
        <begin position="481"/>
        <end position="508"/>
    </location>
</feature>
<evidence type="ECO:0000250" key="1">
    <source>
        <dbReference type="UniProtKB" id="Q7RTY1"/>
    </source>
</evidence>
<evidence type="ECO:0000255" key="2"/>
<evidence type="ECO:0000305" key="3"/>
<comment type="function">
    <text evidence="1">Extracellular pH-and Na(+)-sensitive low-affinity creatine transporter. Also functions as a pH-independent carnitine efflux transporter.</text>
</comment>
<comment type="catalytic activity">
    <reaction evidence="1">
        <text>creatine(in) = creatine(out)</text>
        <dbReference type="Rhea" id="RHEA:73043"/>
        <dbReference type="ChEBI" id="CHEBI:57947"/>
    </reaction>
</comment>
<comment type="catalytic activity">
    <reaction evidence="1">
        <text>(R)-carnitine(in) = (R)-carnitine(out)</text>
        <dbReference type="Rhea" id="RHEA:34959"/>
        <dbReference type="ChEBI" id="CHEBI:16347"/>
    </reaction>
</comment>
<comment type="subcellular location">
    <subcellularLocation>
        <location evidence="1">Cell membrane</location>
        <topology evidence="2">Multi-pass membrane protein</topology>
    </subcellularLocation>
</comment>
<comment type="similarity">
    <text evidence="3">Belongs to the major facilitator superfamily. Monocarboxylate porter (TC 2.A.1.13) family.</text>
</comment>
<comment type="sequence caution" evidence="3">
    <conflict type="frameshift">
        <sequence resource="EMBL-CDS" id="AAH34205"/>
    </conflict>
</comment>
<dbReference type="EMBL" id="AK004556">
    <property type="protein sequence ID" value="BAB23369.2"/>
    <property type="molecule type" value="mRNA"/>
</dbReference>
<dbReference type="EMBL" id="AK004599">
    <property type="protein sequence ID" value="BAB23400.2"/>
    <property type="molecule type" value="mRNA"/>
</dbReference>
<dbReference type="EMBL" id="AK004684">
    <property type="protein sequence ID" value="BAB23471.2"/>
    <property type="molecule type" value="mRNA"/>
</dbReference>
<dbReference type="EMBL" id="BC034205">
    <property type="protein sequence ID" value="AAH34205.1"/>
    <property type="status" value="ALT_FRAME"/>
    <property type="molecule type" value="mRNA"/>
</dbReference>
<dbReference type="EMBL" id="BC055839">
    <property type="protein sequence ID" value="AAH55839.1"/>
    <property type="molecule type" value="mRNA"/>
</dbReference>
<dbReference type="CCDS" id="CCDS23913.1"/>
<dbReference type="RefSeq" id="NP_080083.2">
    <property type="nucleotide sequence ID" value="NM_025807.3"/>
</dbReference>
<dbReference type="RefSeq" id="XP_006514023.1">
    <property type="nucleotide sequence ID" value="XM_006513960.5"/>
</dbReference>
<dbReference type="SMR" id="Q7TM99"/>
<dbReference type="BioGRID" id="211767">
    <property type="interactions" value="1"/>
</dbReference>
<dbReference type="FunCoup" id="Q7TM99">
    <property type="interactions" value="140"/>
</dbReference>
<dbReference type="STRING" id="10090.ENSMUSP00000047912"/>
<dbReference type="iPTMnet" id="Q7TM99"/>
<dbReference type="PhosphoSitePlus" id="Q7TM99"/>
<dbReference type="PaxDb" id="10090-ENSMUSP00000047912"/>
<dbReference type="ProteomicsDB" id="290283"/>
<dbReference type="Antibodypedia" id="55915">
    <property type="antibodies" value="100 antibodies from 21 providers"/>
</dbReference>
<dbReference type="DNASU" id="66859"/>
<dbReference type="Ensembl" id="ENSMUST00000046807.7">
    <property type="protein sequence ID" value="ENSMUSP00000047912.7"/>
    <property type="gene ID" value="ENSMUSG00000037762.7"/>
</dbReference>
<dbReference type="GeneID" id="66859"/>
<dbReference type="KEGG" id="mmu:66859"/>
<dbReference type="UCSC" id="uc007fnq.1">
    <property type="organism name" value="mouse"/>
</dbReference>
<dbReference type="AGR" id="MGI:1914109"/>
<dbReference type="CTD" id="220963"/>
<dbReference type="MGI" id="MGI:1914109">
    <property type="gene designation" value="Slc16a9"/>
</dbReference>
<dbReference type="VEuPathDB" id="HostDB:ENSMUSG00000037762"/>
<dbReference type="eggNOG" id="KOG2504">
    <property type="taxonomic scope" value="Eukaryota"/>
</dbReference>
<dbReference type="GeneTree" id="ENSGT00940000156416"/>
<dbReference type="HOGENOM" id="CLU_001265_59_1_1"/>
<dbReference type="InParanoid" id="Q7TM99"/>
<dbReference type="OMA" id="WLHTYQE"/>
<dbReference type="OrthoDB" id="6509908at2759"/>
<dbReference type="PhylomeDB" id="Q7TM99"/>
<dbReference type="TreeFam" id="TF313792"/>
<dbReference type="BioGRID-ORCS" id="66859">
    <property type="hits" value="1 hit in 76 CRISPR screens"/>
</dbReference>
<dbReference type="ChiTaRS" id="Slc16a9">
    <property type="organism name" value="mouse"/>
</dbReference>
<dbReference type="PRO" id="PR:Q7TM99"/>
<dbReference type="Proteomes" id="UP000000589">
    <property type="component" value="Chromosome 10"/>
</dbReference>
<dbReference type="RNAct" id="Q7TM99">
    <property type="molecule type" value="protein"/>
</dbReference>
<dbReference type="Bgee" id="ENSMUSG00000037762">
    <property type="expression patterns" value="Expressed in pigmented layer of retina and 190 other cell types or tissues"/>
</dbReference>
<dbReference type="GO" id="GO:0005886">
    <property type="term" value="C:plasma membrane"/>
    <property type="evidence" value="ECO:0000250"/>
    <property type="project" value="UniProtKB"/>
</dbReference>
<dbReference type="GO" id="GO:0015226">
    <property type="term" value="F:carnitine transmembrane transporter activity"/>
    <property type="evidence" value="ECO:0000250"/>
    <property type="project" value="UniProtKB"/>
</dbReference>
<dbReference type="GO" id="GO:0005308">
    <property type="term" value="F:creatine transmembrane transporter activity"/>
    <property type="evidence" value="ECO:0000250"/>
    <property type="project" value="UniProtKB"/>
</dbReference>
<dbReference type="GO" id="GO:1902603">
    <property type="term" value="P:carnitine transmembrane transport"/>
    <property type="evidence" value="ECO:0000250"/>
    <property type="project" value="UniProtKB"/>
</dbReference>
<dbReference type="GO" id="GO:0015881">
    <property type="term" value="P:creatine transmembrane transport"/>
    <property type="evidence" value="ECO:0000250"/>
    <property type="project" value="UniProtKB"/>
</dbReference>
<dbReference type="GO" id="GO:0046415">
    <property type="term" value="P:urate metabolic process"/>
    <property type="evidence" value="ECO:0007669"/>
    <property type="project" value="Ensembl"/>
</dbReference>
<dbReference type="CDD" id="cd17428">
    <property type="entry name" value="MFS_MCT9"/>
    <property type="match status" value="1"/>
</dbReference>
<dbReference type="FunFam" id="1.20.1250.20:FF:000195">
    <property type="entry name" value="monocarboxylate transporter 9 isoform X1"/>
    <property type="match status" value="1"/>
</dbReference>
<dbReference type="FunFam" id="1.20.1250.20:FF:000127">
    <property type="entry name" value="Monocarboxylate transporter 9 isoform X2"/>
    <property type="match status" value="1"/>
</dbReference>
<dbReference type="Gene3D" id="1.20.1250.20">
    <property type="entry name" value="MFS general substrate transporter like domains"/>
    <property type="match status" value="2"/>
</dbReference>
<dbReference type="InterPro" id="IPR030767">
    <property type="entry name" value="MCT9"/>
</dbReference>
<dbReference type="InterPro" id="IPR011701">
    <property type="entry name" value="MFS"/>
</dbReference>
<dbReference type="InterPro" id="IPR020846">
    <property type="entry name" value="MFS_dom"/>
</dbReference>
<dbReference type="InterPro" id="IPR036259">
    <property type="entry name" value="MFS_trans_sf"/>
</dbReference>
<dbReference type="InterPro" id="IPR050327">
    <property type="entry name" value="Proton-linked_MCT"/>
</dbReference>
<dbReference type="PANTHER" id="PTHR11360">
    <property type="entry name" value="MONOCARBOXYLATE TRANSPORTER"/>
    <property type="match status" value="1"/>
</dbReference>
<dbReference type="PANTHER" id="PTHR11360:SF158">
    <property type="entry name" value="MONOCARBOXYLATE TRANSPORTER 9"/>
    <property type="match status" value="1"/>
</dbReference>
<dbReference type="Pfam" id="PF07690">
    <property type="entry name" value="MFS_1"/>
    <property type="match status" value="2"/>
</dbReference>
<dbReference type="SUPFAM" id="SSF103473">
    <property type="entry name" value="MFS general substrate transporter"/>
    <property type="match status" value="1"/>
</dbReference>
<dbReference type="PROSITE" id="PS50850">
    <property type="entry name" value="MFS"/>
    <property type="match status" value="1"/>
</dbReference>
<reference key="1">
    <citation type="journal article" date="2005" name="Science">
        <title>The transcriptional landscape of the mammalian genome.</title>
        <authorList>
            <person name="Carninci P."/>
            <person name="Kasukawa T."/>
            <person name="Katayama S."/>
            <person name="Gough J."/>
            <person name="Frith M.C."/>
            <person name="Maeda N."/>
            <person name="Oyama R."/>
            <person name="Ravasi T."/>
            <person name="Lenhard B."/>
            <person name="Wells C."/>
            <person name="Kodzius R."/>
            <person name="Shimokawa K."/>
            <person name="Bajic V.B."/>
            <person name="Brenner S.E."/>
            <person name="Batalov S."/>
            <person name="Forrest A.R."/>
            <person name="Zavolan M."/>
            <person name="Davis M.J."/>
            <person name="Wilming L.G."/>
            <person name="Aidinis V."/>
            <person name="Allen J.E."/>
            <person name="Ambesi-Impiombato A."/>
            <person name="Apweiler R."/>
            <person name="Aturaliya R.N."/>
            <person name="Bailey T.L."/>
            <person name="Bansal M."/>
            <person name="Baxter L."/>
            <person name="Beisel K.W."/>
            <person name="Bersano T."/>
            <person name="Bono H."/>
            <person name="Chalk A.M."/>
            <person name="Chiu K.P."/>
            <person name="Choudhary V."/>
            <person name="Christoffels A."/>
            <person name="Clutterbuck D.R."/>
            <person name="Crowe M.L."/>
            <person name="Dalla E."/>
            <person name="Dalrymple B.P."/>
            <person name="de Bono B."/>
            <person name="Della Gatta G."/>
            <person name="di Bernardo D."/>
            <person name="Down T."/>
            <person name="Engstrom P."/>
            <person name="Fagiolini M."/>
            <person name="Faulkner G."/>
            <person name="Fletcher C.F."/>
            <person name="Fukushima T."/>
            <person name="Furuno M."/>
            <person name="Futaki S."/>
            <person name="Gariboldi M."/>
            <person name="Georgii-Hemming P."/>
            <person name="Gingeras T.R."/>
            <person name="Gojobori T."/>
            <person name="Green R.E."/>
            <person name="Gustincich S."/>
            <person name="Harbers M."/>
            <person name="Hayashi Y."/>
            <person name="Hensch T.K."/>
            <person name="Hirokawa N."/>
            <person name="Hill D."/>
            <person name="Huminiecki L."/>
            <person name="Iacono M."/>
            <person name="Ikeo K."/>
            <person name="Iwama A."/>
            <person name="Ishikawa T."/>
            <person name="Jakt M."/>
            <person name="Kanapin A."/>
            <person name="Katoh M."/>
            <person name="Kawasawa Y."/>
            <person name="Kelso J."/>
            <person name="Kitamura H."/>
            <person name="Kitano H."/>
            <person name="Kollias G."/>
            <person name="Krishnan S.P."/>
            <person name="Kruger A."/>
            <person name="Kummerfeld S.K."/>
            <person name="Kurochkin I.V."/>
            <person name="Lareau L.F."/>
            <person name="Lazarevic D."/>
            <person name="Lipovich L."/>
            <person name="Liu J."/>
            <person name="Liuni S."/>
            <person name="McWilliam S."/>
            <person name="Madan Babu M."/>
            <person name="Madera M."/>
            <person name="Marchionni L."/>
            <person name="Matsuda H."/>
            <person name="Matsuzawa S."/>
            <person name="Miki H."/>
            <person name="Mignone F."/>
            <person name="Miyake S."/>
            <person name="Morris K."/>
            <person name="Mottagui-Tabar S."/>
            <person name="Mulder N."/>
            <person name="Nakano N."/>
            <person name="Nakauchi H."/>
            <person name="Ng P."/>
            <person name="Nilsson R."/>
            <person name="Nishiguchi S."/>
            <person name="Nishikawa S."/>
            <person name="Nori F."/>
            <person name="Ohara O."/>
            <person name="Okazaki Y."/>
            <person name="Orlando V."/>
            <person name="Pang K.C."/>
            <person name="Pavan W.J."/>
            <person name="Pavesi G."/>
            <person name="Pesole G."/>
            <person name="Petrovsky N."/>
            <person name="Piazza S."/>
            <person name="Reed J."/>
            <person name="Reid J.F."/>
            <person name="Ring B.Z."/>
            <person name="Ringwald M."/>
            <person name="Rost B."/>
            <person name="Ruan Y."/>
            <person name="Salzberg S.L."/>
            <person name="Sandelin A."/>
            <person name="Schneider C."/>
            <person name="Schoenbach C."/>
            <person name="Sekiguchi K."/>
            <person name="Semple C.A."/>
            <person name="Seno S."/>
            <person name="Sessa L."/>
            <person name="Sheng Y."/>
            <person name="Shibata Y."/>
            <person name="Shimada H."/>
            <person name="Shimada K."/>
            <person name="Silva D."/>
            <person name="Sinclair B."/>
            <person name="Sperling S."/>
            <person name="Stupka E."/>
            <person name="Sugiura K."/>
            <person name="Sultana R."/>
            <person name="Takenaka Y."/>
            <person name="Taki K."/>
            <person name="Tammoja K."/>
            <person name="Tan S.L."/>
            <person name="Tang S."/>
            <person name="Taylor M.S."/>
            <person name="Tegner J."/>
            <person name="Teichmann S.A."/>
            <person name="Ueda H.R."/>
            <person name="van Nimwegen E."/>
            <person name="Verardo R."/>
            <person name="Wei C.L."/>
            <person name="Yagi K."/>
            <person name="Yamanishi H."/>
            <person name="Zabarovsky E."/>
            <person name="Zhu S."/>
            <person name="Zimmer A."/>
            <person name="Hide W."/>
            <person name="Bult C."/>
            <person name="Grimmond S.M."/>
            <person name="Teasdale R.D."/>
            <person name="Liu E.T."/>
            <person name="Brusic V."/>
            <person name="Quackenbush J."/>
            <person name="Wahlestedt C."/>
            <person name="Mattick J.S."/>
            <person name="Hume D.A."/>
            <person name="Kai C."/>
            <person name="Sasaki D."/>
            <person name="Tomaru Y."/>
            <person name="Fukuda S."/>
            <person name="Kanamori-Katayama M."/>
            <person name="Suzuki M."/>
            <person name="Aoki J."/>
            <person name="Arakawa T."/>
            <person name="Iida J."/>
            <person name="Imamura K."/>
            <person name="Itoh M."/>
            <person name="Kato T."/>
            <person name="Kawaji H."/>
            <person name="Kawagashira N."/>
            <person name="Kawashima T."/>
            <person name="Kojima M."/>
            <person name="Kondo S."/>
            <person name="Konno H."/>
            <person name="Nakano K."/>
            <person name="Ninomiya N."/>
            <person name="Nishio T."/>
            <person name="Okada M."/>
            <person name="Plessy C."/>
            <person name="Shibata K."/>
            <person name="Shiraki T."/>
            <person name="Suzuki S."/>
            <person name="Tagami M."/>
            <person name="Waki K."/>
            <person name="Watahiki A."/>
            <person name="Okamura-Oho Y."/>
            <person name="Suzuki H."/>
            <person name="Kawai J."/>
            <person name="Hayashizaki Y."/>
        </authorList>
    </citation>
    <scope>NUCLEOTIDE SEQUENCE [LARGE SCALE MRNA]</scope>
    <source>
        <strain>C57BL/6J</strain>
        <tissue>Lung</tissue>
        <tissue>Testis</tissue>
    </source>
</reference>
<reference key="2">
    <citation type="journal article" date="2004" name="Genome Res.">
        <title>The status, quality, and expansion of the NIH full-length cDNA project: the Mammalian Gene Collection (MGC).</title>
        <authorList>
            <consortium name="The MGC Project Team"/>
        </authorList>
    </citation>
    <scope>NUCLEOTIDE SEQUENCE [LARGE SCALE MRNA]</scope>
    <source>
        <strain>FVB/N</strain>
        <tissue>Colon</tissue>
        <tissue>Kidney</tissue>
    </source>
</reference>
<accession>Q7TM99</accession>
<accession>Q0P652</accession>
<protein>
    <recommendedName>
        <fullName>Monocarboxylate transporter 9</fullName>
        <shortName>MCT 9</shortName>
    </recommendedName>
    <alternativeName>
        <fullName>Solute carrier family 16 member 9</fullName>
    </alternativeName>
</protein>
<gene>
    <name type="primary">Slc16a9</name>
    <name type="synonym">Mct9</name>
</gene>